<reference key="1">
    <citation type="journal article" date="2008" name="Chem. Biol. Interact.">
        <title>Extending the Bacillus cereus group genomics to putative food-borne pathogens of different toxicity.</title>
        <authorList>
            <person name="Lapidus A."/>
            <person name="Goltsman E."/>
            <person name="Auger S."/>
            <person name="Galleron N."/>
            <person name="Segurens B."/>
            <person name="Dossat C."/>
            <person name="Land M.L."/>
            <person name="Broussolle V."/>
            <person name="Brillard J."/>
            <person name="Guinebretiere M.-H."/>
            <person name="Sanchis V."/>
            <person name="Nguen-the C."/>
            <person name="Lereclus D."/>
            <person name="Richardson P."/>
            <person name="Wincker P."/>
            <person name="Weissenbach J."/>
            <person name="Ehrlich S.D."/>
            <person name="Sorokin A."/>
        </authorList>
    </citation>
    <scope>NUCLEOTIDE SEQUENCE [LARGE SCALE GENOMIC DNA]</scope>
    <source>
        <strain>DSM 22905 / CIP 110041 / 391-98 / NVH 391-98</strain>
    </source>
</reference>
<protein>
    <recommendedName>
        <fullName evidence="1">UPF0295 protein Bcer98_0460</fullName>
    </recommendedName>
</protein>
<sequence length="123" mass="14118">MGIKYSNKINKIRTFALSLVFIGLLIAYLGVFFRENIIIMTTFMMLGFLAVLASTFVYFWIGMLSTKTVQIVCPSCNKPTKMLGRVDVCMHCNQPLTLDSNLEGKEFDEKYNKKTIKHTNIYK</sequence>
<dbReference type="EMBL" id="CP000764">
    <property type="protein sequence ID" value="ABS20815.1"/>
    <property type="status" value="ALT_INIT"/>
    <property type="molecule type" value="Genomic_DNA"/>
</dbReference>
<dbReference type="RefSeq" id="WP_041809430.1">
    <property type="nucleotide sequence ID" value="NC_009674.1"/>
</dbReference>
<dbReference type="SMR" id="A7GL07"/>
<dbReference type="STRING" id="315749.Bcer98_0460"/>
<dbReference type="GeneID" id="33895804"/>
<dbReference type="KEGG" id="bcy:Bcer98_0460"/>
<dbReference type="eggNOG" id="ENOG50313Y4">
    <property type="taxonomic scope" value="Bacteria"/>
</dbReference>
<dbReference type="HOGENOM" id="CLU_143991_0_0_9"/>
<dbReference type="OrthoDB" id="1653848at2"/>
<dbReference type="Proteomes" id="UP000002300">
    <property type="component" value="Chromosome"/>
</dbReference>
<dbReference type="GO" id="GO:0005886">
    <property type="term" value="C:plasma membrane"/>
    <property type="evidence" value="ECO:0007669"/>
    <property type="project" value="UniProtKB-SubCell"/>
</dbReference>
<dbReference type="HAMAP" id="MF_01502">
    <property type="entry name" value="UPF0295"/>
    <property type="match status" value="1"/>
</dbReference>
<dbReference type="InterPro" id="IPR020912">
    <property type="entry name" value="UPF0295"/>
</dbReference>
<dbReference type="NCBIfam" id="NF002796">
    <property type="entry name" value="PRK02935.1"/>
    <property type="match status" value="1"/>
</dbReference>
<dbReference type="Pfam" id="PF11023">
    <property type="entry name" value="DUF2614"/>
    <property type="match status" value="1"/>
</dbReference>
<organism>
    <name type="scientific">Bacillus cytotoxicus (strain DSM 22905 / CIP 110041 / 391-98 / NVH 391-98)</name>
    <dbReference type="NCBI Taxonomy" id="315749"/>
    <lineage>
        <taxon>Bacteria</taxon>
        <taxon>Bacillati</taxon>
        <taxon>Bacillota</taxon>
        <taxon>Bacilli</taxon>
        <taxon>Bacillales</taxon>
        <taxon>Bacillaceae</taxon>
        <taxon>Bacillus</taxon>
        <taxon>Bacillus cereus group</taxon>
    </lineage>
</organism>
<keyword id="KW-1003">Cell membrane</keyword>
<keyword id="KW-0472">Membrane</keyword>
<keyword id="KW-0812">Transmembrane</keyword>
<keyword id="KW-1133">Transmembrane helix</keyword>
<gene>
    <name type="ordered locus">Bcer98_0460</name>
</gene>
<accession>A7GL07</accession>
<name>Y460_BACCN</name>
<proteinExistence type="inferred from homology"/>
<evidence type="ECO:0000255" key="1">
    <source>
        <dbReference type="HAMAP-Rule" id="MF_01502"/>
    </source>
</evidence>
<evidence type="ECO:0000305" key="2"/>
<comment type="subcellular location">
    <subcellularLocation>
        <location evidence="1">Cell membrane</location>
        <topology evidence="1">Multi-pass membrane protein</topology>
    </subcellularLocation>
</comment>
<comment type="similarity">
    <text evidence="1">Belongs to the UPF0295 family.</text>
</comment>
<comment type="sequence caution" evidence="2">
    <conflict type="erroneous initiation">
        <sequence resource="EMBL-CDS" id="ABS20815"/>
    </conflict>
</comment>
<feature type="chain" id="PRO_0000346309" description="UPF0295 protein Bcer98_0460">
    <location>
        <begin position="1"/>
        <end position="123"/>
    </location>
</feature>
<feature type="transmembrane region" description="Helical" evidence="1">
    <location>
        <begin position="12"/>
        <end position="32"/>
    </location>
</feature>
<feature type="transmembrane region" description="Helical" evidence="1">
    <location>
        <begin position="43"/>
        <end position="63"/>
    </location>
</feature>